<proteinExistence type="inferred from homology"/>
<gene>
    <name evidence="1" type="primary">guaB</name>
    <name type="ordered locus">MW0366</name>
</gene>
<sequence>MWESKFAKESLTFDDVLLIPAQSDILPKDVDLSVQLSDKAKLNIPVISAGMDTVTESKMAIAMARQGGLGVIHKNMGVEEQADEVQKVKRSENGVISNPFFLTPEESVYEAEALMGKYRISGVPIVDNKEDRNLVGILTNRDLRFIEDFSIKIVDVMTQENLITAPVNTTLEEAEKILQKHKIEKLPLVKDGRLEGLITIKDIEKVIEFPNAAKDEHGRLLVAAAIGISKDTDIRAQKLVEAGVDVLVIDTAHGHSKGVIDQVKHIKKTYPEITLVAGNVATAEATKDLFEAGADIVKVGIGPGSICTTRVVAGVGVPQITAIYDCATEARKHGKAIIADGGIKFSGDIIKALAAGGHAVMLGSLLAGTEESPGATEIFQGRQYKVYRGMGSLGAMEKGSNDRYFQEDKAPKKFVPEGIEGRTAYKGALQDTIYQLMGGVRAGMGYTGSHDLRELREEAQFTRMGPAGLAESHPHNIQITKESPNYSF</sequence>
<keyword id="KW-0129">CBS domain</keyword>
<keyword id="KW-0332">GMP biosynthesis</keyword>
<keyword id="KW-0479">Metal-binding</keyword>
<keyword id="KW-0520">NAD</keyword>
<keyword id="KW-0560">Oxidoreductase</keyword>
<keyword id="KW-0630">Potassium</keyword>
<keyword id="KW-0658">Purine biosynthesis</keyword>
<keyword id="KW-0677">Repeat</keyword>
<accession>Q8NY70</accession>
<comment type="function">
    <text evidence="1">Catalyzes the conversion of inosine 5'-phosphate (IMP) to xanthosine 5'-phosphate (XMP), the first committed and rate-limiting step in the de novo synthesis of guanine nucleotides, and therefore plays an important role in the regulation of cell growth.</text>
</comment>
<comment type="catalytic activity">
    <reaction evidence="1">
        <text>IMP + NAD(+) + H2O = XMP + NADH + H(+)</text>
        <dbReference type="Rhea" id="RHEA:11708"/>
        <dbReference type="ChEBI" id="CHEBI:15377"/>
        <dbReference type="ChEBI" id="CHEBI:15378"/>
        <dbReference type="ChEBI" id="CHEBI:57464"/>
        <dbReference type="ChEBI" id="CHEBI:57540"/>
        <dbReference type="ChEBI" id="CHEBI:57945"/>
        <dbReference type="ChEBI" id="CHEBI:58053"/>
        <dbReference type="EC" id="1.1.1.205"/>
    </reaction>
</comment>
<comment type="cofactor">
    <cofactor evidence="1">
        <name>K(+)</name>
        <dbReference type="ChEBI" id="CHEBI:29103"/>
    </cofactor>
</comment>
<comment type="activity regulation">
    <text evidence="1">Mycophenolic acid (MPA) is a non-competitive inhibitor that prevents formation of the closed enzyme conformation by binding to the same site as the amobile flap. In contrast, mizoribine monophosphate (MZP) is a competitive inhibitor that induces the closed conformation. MPA is a potent inhibitor of mammalian IMPDHs but a poor inhibitor of the bacterial enzymes. MZP is a more potent inhibitor of bacterial IMPDH.</text>
</comment>
<comment type="pathway">
    <text evidence="1">Purine metabolism; XMP biosynthesis via de novo pathway; XMP from IMP: step 1/1.</text>
</comment>
<comment type="subunit">
    <text evidence="1">Homotetramer.</text>
</comment>
<comment type="similarity">
    <text evidence="1">Belongs to the IMPDH/GMPR family.</text>
</comment>
<protein>
    <recommendedName>
        <fullName evidence="1">Inosine-5'-monophosphate dehydrogenase</fullName>
        <shortName evidence="1">IMP dehydrogenase</shortName>
        <shortName evidence="1">IMPD</shortName>
        <shortName evidence="1">IMPDH</shortName>
        <ecNumber evidence="1">1.1.1.205</ecNumber>
    </recommendedName>
</protein>
<dbReference type="EC" id="1.1.1.205" evidence="1"/>
<dbReference type="EMBL" id="BA000033">
    <property type="protein sequence ID" value="BAB94231.1"/>
    <property type="molecule type" value="Genomic_DNA"/>
</dbReference>
<dbReference type="RefSeq" id="WP_000264068.1">
    <property type="nucleotide sequence ID" value="NC_003923.1"/>
</dbReference>
<dbReference type="SMR" id="Q8NY70"/>
<dbReference type="KEGG" id="sam:MW0366"/>
<dbReference type="HOGENOM" id="CLU_022552_1_0_9"/>
<dbReference type="UniPathway" id="UPA00601">
    <property type="reaction ID" value="UER00295"/>
</dbReference>
<dbReference type="GO" id="GO:0003938">
    <property type="term" value="F:IMP dehydrogenase activity"/>
    <property type="evidence" value="ECO:0007669"/>
    <property type="project" value="UniProtKB-UniRule"/>
</dbReference>
<dbReference type="GO" id="GO:0046872">
    <property type="term" value="F:metal ion binding"/>
    <property type="evidence" value="ECO:0007669"/>
    <property type="project" value="UniProtKB-UniRule"/>
</dbReference>
<dbReference type="GO" id="GO:0000166">
    <property type="term" value="F:nucleotide binding"/>
    <property type="evidence" value="ECO:0007669"/>
    <property type="project" value="UniProtKB-UniRule"/>
</dbReference>
<dbReference type="GO" id="GO:0006177">
    <property type="term" value="P:GMP biosynthetic process"/>
    <property type="evidence" value="ECO:0007669"/>
    <property type="project" value="UniProtKB-UniRule"/>
</dbReference>
<dbReference type="GO" id="GO:0006183">
    <property type="term" value="P:GTP biosynthetic process"/>
    <property type="evidence" value="ECO:0007669"/>
    <property type="project" value="TreeGrafter"/>
</dbReference>
<dbReference type="CDD" id="cd04601">
    <property type="entry name" value="CBS_pair_IMPDH"/>
    <property type="match status" value="1"/>
</dbReference>
<dbReference type="CDD" id="cd00381">
    <property type="entry name" value="IMPDH"/>
    <property type="match status" value="1"/>
</dbReference>
<dbReference type="FunFam" id="3.20.20.70:FF:000003">
    <property type="entry name" value="GMP reductase"/>
    <property type="match status" value="1"/>
</dbReference>
<dbReference type="Gene3D" id="3.20.20.70">
    <property type="entry name" value="Aldolase class I"/>
    <property type="match status" value="1"/>
</dbReference>
<dbReference type="HAMAP" id="MF_01964">
    <property type="entry name" value="IMPDH"/>
    <property type="match status" value="1"/>
</dbReference>
<dbReference type="InterPro" id="IPR013785">
    <property type="entry name" value="Aldolase_TIM"/>
</dbReference>
<dbReference type="InterPro" id="IPR000644">
    <property type="entry name" value="CBS_dom"/>
</dbReference>
<dbReference type="InterPro" id="IPR046342">
    <property type="entry name" value="CBS_dom_sf"/>
</dbReference>
<dbReference type="InterPro" id="IPR005990">
    <property type="entry name" value="IMP_DH"/>
</dbReference>
<dbReference type="InterPro" id="IPR015875">
    <property type="entry name" value="IMP_DH/GMP_Rdtase_CS"/>
</dbReference>
<dbReference type="InterPro" id="IPR001093">
    <property type="entry name" value="IMP_DH_GMPRt"/>
</dbReference>
<dbReference type="NCBIfam" id="TIGR01302">
    <property type="entry name" value="IMP_dehydrog"/>
    <property type="match status" value="1"/>
</dbReference>
<dbReference type="PANTHER" id="PTHR11911:SF111">
    <property type="entry name" value="INOSINE-5'-MONOPHOSPHATE DEHYDROGENASE"/>
    <property type="match status" value="1"/>
</dbReference>
<dbReference type="PANTHER" id="PTHR11911">
    <property type="entry name" value="INOSINE-5-MONOPHOSPHATE DEHYDROGENASE RELATED"/>
    <property type="match status" value="1"/>
</dbReference>
<dbReference type="Pfam" id="PF00571">
    <property type="entry name" value="CBS"/>
    <property type="match status" value="2"/>
</dbReference>
<dbReference type="Pfam" id="PF00478">
    <property type="entry name" value="IMPDH"/>
    <property type="match status" value="1"/>
</dbReference>
<dbReference type="PIRSF" id="PIRSF000130">
    <property type="entry name" value="IMPDH"/>
    <property type="match status" value="1"/>
</dbReference>
<dbReference type="SMART" id="SM00116">
    <property type="entry name" value="CBS"/>
    <property type="match status" value="2"/>
</dbReference>
<dbReference type="SMART" id="SM01240">
    <property type="entry name" value="IMPDH"/>
    <property type="match status" value="1"/>
</dbReference>
<dbReference type="SUPFAM" id="SSF54631">
    <property type="entry name" value="CBS-domain pair"/>
    <property type="match status" value="1"/>
</dbReference>
<dbReference type="SUPFAM" id="SSF51412">
    <property type="entry name" value="Inosine monophosphate dehydrogenase (IMPDH)"/>
    <property type="match status" value="1"/>
</dbReference>
<dbReference type="PROSITE" id="PS51371">
    <property type="entry name" value="CBS"/>
    <property type="match status" value="2"/>
</dbReference>
<dbReference type="PROSITE" id="PS00487">
    <property type="entry name" value="IMP_DH_GMP_RED"/>
    <property type="match status" value="1"/>
</dbReference>
<organism>
    <name type="scientific">Staphylococcus aureus (strain MW2)</name>
    <dbReference type="NCBI Taxonomy" id="196620"/>
    <lineage>
        <taxon>Bacteria</taxon>
        <taxon>Bacillati</taxon>
        <taxon>Bacillota</taxon>
        <taxon>Bacilli</taxon>
        <taxon>Bacillales</taxon>
        <taxon>Staphylococcaceae</taxon>
        <taxon>Staphylococcus</taxon>
    </lineage>
</organism>
<name>IMDH_STAAW</name>
<feature type="chain" id="PRO_0000093711" description="Inosine-5'-monophosphate dehydrogenase">
    <location>
        <begin position="1"/>
        <end position="488"/>
    </location>
</feature>
<feature type="domain" description="CBS 1" evidence="1">
    <location>
        <begin position="95"/>
        <end position="153"/>
    </location>
</feature>
<feature type="domain" description="CBS 2" evidence="1">
    <location>
        <begin position="157"/>
        <end position="216"/>
    </location>
</feature>
<feature type="region of interest" description="Disordered" evidence="2">
    <location>
        <begin position="468"/>
        <end position="488"/>
    </location>
</feature>
<feature type="compositionally biased region" description="Polar residues" evidence="2">
    <location>
        <begin position="475"/>
        <end position="488"/>
    </location>
</feature>
<feature type="active site" description="Thioimidate intermediate" evidence="1">
    <location>
        <position position="307"/>
    </location>
</feature>
<feature type="active site" description="Proton acceptor" evidence="1">
    <location>
        <position position="403"/>
    </location>
</feature>
<feature type="binding site" evidence="1">
    <location>
        <position position="250"/>
    </location>
    <ligand>
        <name>NAD(+)</name>
        <dbReference type="ChEBI" id="CHEBI:57540"/>
    </ligand>
</feature>
<feature type="binding site" evidence="1">
    <location>
        <begin position="300"/>
        <end position="302"/>
    </location>
    <ligand>
        <name>NAD(+)</name>
        <dbReference type="ChEBI" id="CHEBI:57540"/>
    </ligand>
</feature>
<feature type="binding site" description="in other chain" evidence="1">
    <location>
        <position position="302"/>
    </location>
    <ligand>
        <name>K(+)</name>
        <dbReference type="ChEBI" id="CHEBI:29103"/>
        <note>ligand shared between two tetrameric partners</note>
    </ligand>
</feature>
<feature type="binding site" description="in other chain" evidence="1">
    <location>
        <position position="304"/>
    </location>
    <ligand>
        <name>K(+)</name>
        <dbReference type="ChEBI" id="CHEBI:29103"/>
        <note>ligand shared between two tetrameric partners</note>
    </ligand>
</feature>
<feature type="binding site" evidence="1">
    <location>
        <position position="305"/>
    </location>
    <ligand>
        <name>IMP</name>
        <dbReference type="ChEBI" id="CHEBI:58053"/>
    </ligand>
</feature>
<feature type="binding site" description="in other chain" evidence="1">
    <location>
        <position position="307"/>
    </location>
    <ligand>
        <name>K(+)</name>
        <dbReference type="ChEBI" id="CHEBI:29103"/>
        <note>ligand shared between two tetrameric partners</note>
    </ligand>
</feature>
<feature type="binding site" evidence="1">
    <location>
        <begin position="340"/>
        <end position="342"/>
    </location>
    <ligand>
        <name>IMP</name>
        <dbReference type="ChEBI" id="CHEBI:58053"/>
    </ligand>
</feature>
<feature type="binding site" evidence="1">
    <location>
        <begin position="363"/>
        <end position="364"/>
    </location>
    <ligand>
        <name>IMP</name>
        <dbReference type="ChEBI" id="CHEBI:58053"/>
    </ligand>
</feature>
<feature type="binding site" evidence="1">
    <location>
        <begin position="387"/>
        <end position="391"/>
    </location>
    <ligand>
        <name>IMP</name>
        <dbReference type="ChEBI" id="CHEBI:58053"/>
    </ligand>
</feature>
<feature type="binding site" evidence="1">
    <location>
        <position position="417"/>
    </location>
    <ligand>
        <name>IMP</name>
        <dbReference type="ChEBI" id="CHEBI:58053"/>
    </ligand>
</feature>
<feature type="binding site" evidence="1">
    <location>
        <position position="471"/>
    </location>
    <ligand>
        <name>K(+)</name>
        <dbReference type="ChEBI" id="CHEBI:29103"/>
        <note>ligand shared between two tetrameric partners</note>
    </ligand>
</feature>
<feature type="binding site" evidence="1">
    <location>
        <position position="472"/>
    </location>
    <ligand>
        <name>K(+)</name>
        <dbReference type="ChEBI" id="CHEBI:29103"/>
        <note>ligand shared between two tetrameric partners</note>
    </ligand>
</feature>
<feature type="binding site" evidence="1">
    <location>
        <position position="473"/>
    </location>
    <ligand>
        <name>K(+)</name>
        <dbReference type="ChEBI" id="CHEBI:29103"/>
        <note>ligand shared between two tetrameric partners</note>
    </ligand>
</feature>
<evidence type="ECO:0000255" key="1">
    <source>
        <dbReference type="HAMAP-Rule" id="MF_01964"/>
    </source>
</evidence>
<evidence type="ECO:0000256" key="2">
    <source>
        <dbReference type="SAM" id="MobiDB-lite"/>
    </source>
</evidence>
<reference key="1">
    <citation type="journal article" date="2002" name="Lancet">
        <title>Genome and virulence determinants of high virulence community-acquired MRSA.</title>
        <authorList>
            <person name="Baba T."/>
            <person name="Takeuchi F."/>
            <person name="Kuroda M."/>
            <person name="Yuzawa H."/>
            <person name="Aoki K."/>
            <person name="Oguchi A."/>
            <person name="Nagai Y."/>
            <person name="Iwama N."/>
            <person name="Asano K."/>
            <person name="Naimi T."/>
            <person name="Kuroda H."/>
            <person name="Cui L."/>
            <person name="Yamamoto K."/>
            <person name="Hiramatsu K."/>
        </authorList>
    </citation>
    <scope>NUCLEOTIDE SEQUENCE [LARGE SCALE GENOMIC DNA]</scope>
    <source>
        <strain>MW2</strain>
    </source>
</reference>